<protein>
    <recommendedName>
        <fullName evidence="2">PRAME family member 26</fullName>
    </recommendedName>
</protein>
<organism>
    <name type="scientific">Homo sapiens</name>
    <name type="common">Human</name>
    <dbReference type="NCBI Taxonomy" id="9606"/>
    <lineage>
        <taxon>Eukaryota</taxon>
        <taxon>Metazoa</taxon>
        <taxon>Chordata</taxon>
        <taxon>Craniata</taxon>
        <taxon>Vertebrata</taxon>
        <taxon>Euteleostomi</taxon>
        <taxon>Mammalia</taxon>
        <taxon>Eutheria</taxon>
        <taxon>Euarchontoglires</taxon>
        <taxon>Primates</taxon>
        <taxon>Haplorrhini</taxon>
        <taxon>Catarrhini</taxon>
        <taxon>Hominidae</taxon>
        <taxon>Homo</taxon>
    </lineage>
</organism>
<comment type="similarity">
    <text evidence="2">Belongs to the PRAME family.</text>
</comment>
<accession>H0Y7S4</accession>
<dbReference type="EMBL" id="CR589903">
    <property type="status" value="NOT_ANNOTATED_CDS"/>
    <property type="molecule type" value="Genomic_DNA"/>
</dbReference>
<dbReference type="CCDS" id="CCDS76106.1"/>
<dbReference type="RefSeq" id="NP_001293001.1">
    <property type="nucleotide sequence ID" value="NM_001306072.3"/>
</dbReference>
<dbReference type="SMR" id="H0Y7S4"/>
<dbReference type="FunCoup" id="H0Y7S4">
    <property type="interactions" value="36"/>
</dbReference>
<dbReference type="PhosphoSitePlus" id="H0Y7S4"/>
<dbReference type="SwissPalm" id="H0Y7S4"/>
<dbReference type="BioMuta" id="PRAMEF26"/>
<dbReference type="MassIVE" id="H0Y7S4"/>
<dbReference type="Ensembl" id="ENST00000624207.2">
    <property type="protein sequence ID" value="ENSP00000485656.1"/>
    <property type="gene ID" value="ENSG00000280267.7"/>
</dbReference>
<dbReference type="Ensembl" id="ENST00000633532.1">
    <property type="protein sequence ID" value="ENSP00000488002.1"/>
    <property type="gene ID" value="ENSG00000281987.2"/>
</dbReference>
<dbReference type="Ensembl" id="ENST00000636185.2">
    <property type="protein sequence ID" value="ENSP00000490397.1"/>
    <property type="gene ID" value="ENSG00000283216.2"/>
</dbReference>
<dbReference type="GeneID" id="645359"/>
<dbReference type="KEGG" id="hsa:441873"/>
<dbReference type="KEGG" id="hsa:645359"/>
<dbReference type="MANE-Select" id="ENST00000624207.2">
    <property type="protein sequence ID" value="ENSP00000485656.1"/>
    <property type="RefSeq nucleotide sequence ID" value="NM_001306072.3"/>
    <property type="RefSeq protein sequence ID" value="NP_001293001.1"/>
</dbReference>
<dbReference type="AGR" id="HGNC:49178"/>
<dbReference type="AGR" id="HGNC:49179"/>
<dbReference type="CTD" id="441873"/>
<dbReference type="CTD" id="645359"/>
<dbReference type="GeneCards" id="PRAMEF26"/>
<dbReference type="HGNC" id="HGNC:49178">
    <property type="gene designation" value="PRAMEF26"/>
</dbReference>
<dbReference type="neXtProt" id="NX_H0Y7S4"/>
<dbReference type="OpenTargets" id="ENSG00000229571"/>
<dbReference type="OpenTargets" id="ENSG00000280267"/>
<dbReference type="GeneTree" id="ENSGT01030000234531"/>
<dbReference type="InParanoid" id="H0Y7S4"/>
<dbReference type="OMA" id="KCEMADS"/>
<dbReference type="OrthoDB" id="9533139at2759"/>
<dbReference type="PAN-GO" id="H0Y7S4">
    <property type="GO annotations" value="1 GO annotation based on evolutionary models"/>
</dbReference>
<dbReference type="TreeFam" id="TF332708"/>
<dbReference type="PathwayCommons" id="H0Y7S4"/>
<dbReference type="Pharos" id="H0Y7S4">
    <property type="development level" value="Tdark"/>
</dbReference>
<dbReference type="PRO" id="PR:H0Y7S4"/>
<dbReference type="Proteomes" id="UP000005640">
    <property type="component" value="Chromosome 1"/>
</dbReference>
<dbReference type="RNAct" id="H0Y7S4">
    <property type="molecule type" value="protein"/>
</dbReference>
<dbReference type="GO" id="GO:0031462">
    <property type="term" value="C:Cul2-RING ubiquitin ligase complex"/>
    <property type="evidence" value="ECO:0000318"/>
    <property type="project" value="GO_Central"/>
</dbReference>
<dbReference type="GO" id="GO:0005737">
    <property type="term" value="C:cytoplasm"/>
    <property type="evidence" value="ECO:0000318"/>
    <property type="project" value="GO_Central"/>
</dbReference>
<dbReference type="GO" id="GO:1990756">
    <property type="term" value="F:ubiquitin-like ligase-substrate adaptor activity"/>
    <property type="evidence" value="ECO:0000318"/>
    <property type="project" value="GO_Central"/>
</dbReference>
<dbReference type="GO" id="GO:0043066">
    <property type="term" value="P:negative regulation of apoptotic process"/>
    <property type="evidence" value="ECO:0007669"/>
    <property type="project" value="InterPro"/>
</dbReference>
<dbReference type="GO" id="GO:0045596">
    <property type="term" value="P:negative regulation of cell differentiation"/>
    <property type="evidence" value="ECO:0007669"/>
    <property type="project" value="InterPro"/>
</dbReference>
<dbReference type="GO" id="GO:0045892">
    <property type="term" value="P:negative regulation of DNA-templated transcription"/>
    <property type="evidence" value="ECO:0007669"/>
    <property type="project" value="InterPro"/>
</dbReference>
<dbReference type="GO" id="GO:0008284">
    <property type="term" value="P:positive regulation of cell population proliferation"/>
    <property type="evidence" value="ECO:0007669"/>
    <property type="project" value="InterPro"/>
</dbReference>
<dbReference type="GO" id="GO:0043161">
    <property type="term" value="P:proteasome-mediated ubiquitin-dependent protein catabolic process"/>
    <property type="evidence" value="ECO:0000318"/>
    <property type="project" value="GO_Central"/>
</dbReference>
<dbReference type="FunFam" id="3.80.10.10:FF:000079">
    <property type="entry name" value="PRAME family member 18"/>
    <property type="match status" value="1"/>
</dbReference>
<dbReference type="Gene3D" id="3.80.10.10">
    <property type="entry name" value="Ribonuclease Inhibitor"/>
    <property type="match status" value="1"/>
</dbReference>
<dbReference type="InterPro" id="IPR032675">
    <property type="entry name" value="LRR_dom_sf"/>
</dbReference>
<dbReference type="InterPro" id="IPR026271">
    <property type="entry name" value="PRAME"/>
</dbReference>
<dbReference type="InterPro" id="IPR050694">
    <property type="entry name" value="PRAME_domain"/>
</dbReference>
<dbReference type="PANTHER" id="PTHR14224:SF19">
    <property type="entry name" value="PRAME FAMILY MEMBER 11-RELATED"/>
    <property type="match status" value="1"/>
</dbReference>
<dbReference type="PANTHER" id="PTHR14224">
    <property type="entry name" value="SIMILAR TO PREFERENTIALLY EXPRESSED ANTIGEN IN MELANOMA-LIKE 3"/>
    <property type="match status" value="1"/>
</dbReference>
<dbReference type="PIRSF" id="PIRSF038286">
    <property type="entry name" value="PRAME"/>
    <property type="match status" value="1"/>
</dbReference>
<dbReference type="SUPFAM" id="SSF52047">
    <property type="entry name" value="RNI-like"/>
    <property type="match status" value="1"/>
</dbReference>
<name>PRA26_HUMAN</name>
<evidence type="ECO:0000250" key="1">
    <source>
        <dbReference type="UniProtKB" id="Q3UWY1"/>
    </source>
</evidence>
<evidence type="ECO:0000305" key="2"/>
<evidence type="ECO:0000312" key="3">
    <source>
        <dbReference type="HGNC" id="HGNC:49178"/>
    </source>
</evidence>
<sequence length="478" mass="55354">MKMSIRTPPRLLELAGRSVLRDQALAMSTLEELPTELFPPLFMEAFSRRRCEALKLMVQAWPFRRLPLRPLIKMPCLETFQAVLNGLDALLTHGVRPRRWKLQVLDLQDVCENFWMVWSEAMARGCFLNAKRNKKPVQDCPRMRGRQPLTVFVELWLKNRTLDEHLTCLLLWVKQRKDLLHLCCKKLKILGMPFRNIRSILKMVNLDCIQEVEVNCKWVLPILTQFTPYLGHMRNLQKLVLSHMDVSRYVSPEQKKEIVTQFTTQFLKLHCLQKLYMNSVSFLEGHLDQLLSCLKTSLKVLTITNCVLLESDLKHLSQCPSISQLKTLDLSGIRLTNYSLVPLQILLEKVAATLEYLDLDDCGIIDSQVNAILPALSRCFELNTFSFCGNPISMATLENLLSHTIILKNLCLELYPAPRESYGADGTLCWSRFTQIRAELMKRVRDLRHPKRILFGTDYCPDCGNRSFYDLEADQYCC</sequence>
<keyword id="KW-0433">Leucine-rich repeat</keyword>
<keyword id="KW-1185">Reference proteome</keyword>
<keyword id="KW-0677">Repeat</keyword>
<feature type="chain" id="PRO_0000424822" description="PRAME family member 26">
    <location>
        <begin position="1"/>
        <end position="478"/>
    </location>
</feature>
<feature type="repeat" description="LRR 1; degenerate" evidence="1">
    <location>
        <begin position="99"/>
        <end position="126"/>
    </location>
</feature>
<feature type="repeat" description="LRR 2; degenerate" evidence="1">
    <location>
        <begin position="181"/>
        <end position="205"/>
    </location>
</feature>
<feature type="repeat" description="LRR 3; degenerate" evidence="1">
    <location>
        <begin position="206"/>
        <end position="232"/>
    </location>
</feature>
<feature type="repeat" description="LRR 4; degenerate" evidence="1">
    <location>
        <begin position="233"/>
        <end position="268"/>
    </location>
</feature>
<feature type="repeat" description="LRR 5" evidence="1">
    <location>
        <begin position="269"/>
        <end position="294"/>
    </location>
</feature>
<feature type="repeat" description="LRR 6" evidence="1">
    <location>
        <begin position="295"/>
        <end position="326"/>
    </location>
</feature>
<feature type="repeat" description="LRR 7" evidence="1">
    <location>
        <begin position="327"/>
        <end position="347"/>
    </location>
</feature>
<feature type="repeat" description="LRR 8" evidence="1">
    <location>
        <begin position="351"/>
        <end position="378"/>
    </location>
</feature>
<feature type="repeat" description="LRR 9" evidence="1">
    <location>
        <begin position="379"/>
        <end position="403"/>
    </location>
</feature>
<gene>
    <name evidence="3" type="primary">PRAMEF26</name>
</gene>
<proteinExistence type="inferred from homology"/>
<reference key="1">
    <citation type="journal article" date="2006" name="Nature">
        <title>The DNA sequence and biological annotation of human chromosome 1.</title>
        <authorList>
            <person name="Gregory S.G."/>
            <person name="Barlow K.F."/>
            <person name="McLay K.E."/>
            <person name="Kaul R."/>
            <person name="Swarbreck D."/>
            <person name="Dunham A."/>
            <person name="Scott C.E."/>
            <person name="Howe K.L."/>
            <person name="Woodfine K."/>
            <person name="Spencer C.C.A."/>
            <person name="Jones M.C."/>
            <person name="Gillson C."/>
            <person name="Searle S."/>
            <person name="Zhou Y."/>
            <person name="Kokocinski F."/>
            <person name="McDonald L."/>
            <person name="Evans R."/>
            <person name="Phillips K."/>
            <person name="Atkinson A."/>
            <person name="Cooper R."/>
            <person name="Jones C."/>
            <person name="Hall R.E."/>
            <person name="Andrews T.D."/>
            <person name="Lloyd C."/>
            <person name="Ainscough R."/>
            <person name="Almeida J.P."/>
            <person name="Ambrose K.D."/>
            <person name="Anderson F."/>
            <person name="Andrew R.W."/>
            <person name="Ashwell R.I.S."/>
            <person name="Aubin K."/>
            <person name="Babbage A.K."/>
            <person name="Bagguley C.L."/>
            <person name="Bailey J."/>
            <person name="Beasley H."/>
            <person name="Bethel G."/>
            <person name="Bird C.P."/>
            <person name="Bray-Allen S."/>
            <person name="Brown J.Y."/>
            <person name="Brown A.J."/>
            <person name="Buckley D."/>
            <person name="Burton J."/>
            <person name="Bye J."/>
            <person name="Carder C."/>
            <person name="Chapman J.C."/>
            <person name="Clark S.Y."/>
            <person name="Clarke G."/>
            <person name="Clee C."/>
            <person name="Cobley V."/>
            <person name="Collier R.E."/>
            <person name="Corby N."/>
            <person name="Coville G.J."/>
            <person name="Davies J."/>
            <person name="Deadman R."/>
            <person name="Dunn M."/>
            <person name="Earthrowl M."/>
            <person name="Ellington A.G."/>
            <person name="Errington H."/>
            <person name="Frankish A."/>
            <person name="Frankland J."/>
            <person name="French L."/>
            <person name="Garner P."/>
            <person name="Garnett J."/>
            <person name="Gay L."/>
            <person name="Ghori M.R.J."/>
            <person name="Gibson R."/>
            <person name="Gilby L.M."/>
            <person name="Gillett W."/>
            <person name="Glithero R.J."/>
            <person name="Grafham D.V."/>
            <person name="Griffiths C."/>
            <person name="Griffiths-Jones S."/>
            <person name="Grocock R."/>
            <person name="Hammond S."/>
            <person name="Harrison E.S.I."/>
            <person name="Hart E."/>
            <person name="Haugen E."/>
            <person name="Heath P.D."/>
            <person name="Holmes S."/>
            <person name="Holt K."/>
            <person name="Howden P.J."/>
            <person name="Hunt A.R."/>
            <person name="Hunt S.E."/>
            <person name="Hunter G."/>
            <person name="Isherwood J."/>
            <person name="James R."/>
            <person name="Johnson C."/>
            <person name="Johnson D."/>
            <person name="Joy A."/>
            <person name="Kay M."/>
            <person name="Kershaw J.K."/>
            <person name="Kibukawa M."/>
            <person name="Kimberley A.M."/>
            <person name="King A."/>
            <person name="Knights A.J."/>
            <person name="Lad H."/>
            <person name="Laird G."/>
            <person name="Lawlor S."/>
            <person name="Leongamornlert D.A."/>
            <person name="Lloyd D.M."/>
            <person name="Loveland J."/>
            <person name="Lovell J."/>
            <person name="Lush M.J."/>
            <person name="Lyne R."/>
            <person name="Martin S."/>
            <person name="Mashreghi-Mohammadi M."/>
            <person name="Matthews L."/>
            <person name="Matthews N.S.W."/>
            <person name="McLaren S."/>
            <person name="Milne S."/>
            <person name="Mistry S."/>
            <person name="Moore M.J.F."/>
            <person name="Nickerson T."/>
            <person name="O'Dell C.N."/>
            <person name="Oliver K."/>
            <person name="Palmeiri A."/>
            <person name="Palmer S.A."/>
            <person name="Parker A."/>
            <person name="Patel D."/>
            <person name="Pearce A.V."/>
            <person name="Peck A.I."/>
            <person name="Pelan S."/>
            <person name="Phelps K."/>
            <person name="Phillimore B.J."/>
            <person name="Plumb R."/>
            <person name="Rajan J."/>
            <person name="Raymond C."/>
            <person name="Rouse G."/>
            <person name="Saenphimmachak C."/>
            <person name="Sehra H.K."/>
            <person name="Sheridan E."/>
            <person name="Shownkeen R."/>
            <person name="Sims S."/>
            <person name="Skuce C.D."/>
            <person name="Smith M."/>
            <person name="Steward C."/>
            <person name="Subramanian S."/>
            <person name="Sycamore N."/>
            <person name="Tracey A."/>
            <person name="Tromans A."/>
            <person name="Van Helmond Z."/>
            <person name="Wall M."/>
            <person name="Wallis J.M."/>
            <person name="White S."/>
            <person name="Whitehead S.L."/>
            <person name="Wilkinson J.E."/>
            <person name="Willey D.L."/>
            <person name="Williams H."/>
            <person name="Wilming L."/>
            <person name="Wray P.W."/>
            <person name="Wu Z."/>
            <person name="Coulson A."/>
            <person name="Vaudin M."/>
            <person name="Sulston J.E."/>
            <person name="Durbin R.M."/>
            <person name="Hubbard T."/>
            <person name="Wooster R."/>
            <person name="Dunham I."/>
            <person name="Carter N.P."/>
            <person name="McVean G."/>
            <person name="Ross M.T."/>
            <person name="Harrow J."/>
            <person name="Olson M.V."/>
            <person name="Beck S."/>
            <person name="Rogers J."/>
            <person name="Bentley D.R."/>
        </authorList>
    </citation>
    <scope>NUCLEOTIDE SEQUENCE [LARGE SCALE GENOMIC DNA]</scope>
</reference>